<dbReference type="PIR" id="A02040">
    <property type="entry name" value="MHMS38"/>
</dbReference>
<dbReference type="SMR" id="P06330"/>
<dbReference type="FunCoup" id="P06330">
    <property type="interactions" value="546"/>
</dbReference>
<dbReference type="IntAct" id="P06330">
    <property type="interactions" value="1"/>
</dbReference>
<dbReference type="MINT" id="P06330"/>
<dbReference type="GlyGen" id="P06330">
    <property type="glycosylation" value="1 site, 1 O-linked glycan (1 site)"/>
</dbReference>
<dbReference type="jPOST" id="P06330"/>
<dbReference type="TopDownProteomics" id="P06330"/>
<dbReference type="InParanoid" id="P06330"/>
<dbReference type="Proteomes" id="UP000000589">
    <property type="component" value="Unplaced"/>
</dbReference>
<dbReference type="RNAct" id="P06330">
    <property type="molecule type" value="protein"/>
</dbReference>
<dbReference type="GO" id="GO:0005576">
    <property type="term" value="C:extracellular region"/>
    <property type="evidence" value="ECO:0007669"/>
    <property type="project" value="UniProtKB-ARBA"/>
</dbReference>
<dbReference type="GO" id="GO:0019814">
    <property type="term" value="C:immunoglobulin complex"/>
    <property type="evidence" value="ECO:0007669"/>
    <property type="project" value="UniProtKB-KW"/>
</dbReference>
<dbReference type="GO" id="GO:0003823">
    <property type="term" value="F:antigen binding"/>
    <property type="evidence" value="ECO:0000318"/>
    <property type="project" value="GO_Central"/>
</dbReference>
<dbReference type="GO" id="GO:0016064">
    <property type="term" value="P:immunoglobulin mediated immune response"/>
    <property type="evidence" value="ECO:0000318"/>
    <property type="project" value="GO_Central"/>
</dbReference>
<dbReference type="CDD" id="cd04981">
    <property type="entry name" value="IgV_H"/>
    <property type="match status" value="1"/>
</dbReference>
<dbReference type="FunFam" id="2.60.40.10:FF:001025">
    <property type="entry name" value="Immunoglobulin heavy variable V1-74"/>
    <property type="match status" value="1"/>
</dbReference>
<dbReference type="Gene3D" id="2.60.40.10">
    <property type="entry name" value="Immunoglobulins"/>
    <property type="match status" value="1"/>
</dbReference>
<dbReference type="InterPro" id="IPR007110">
    <property type="entry name" value="Ig-like_dom"/>
</dbReference>
<dbReference type="InterPro" id="IPR036179">
    <property type="entry name" value="Ig-like_dom_sf"/>
</dbReference>
<dbReference type="InterPro" id="IPR013783">
    <property type="entry name" value="Ig-like_fold"/>
</dbReference>
<dbReference type="InterPro" id="IPR003599">
    <property type="entry name" value="Ig_sub"/>
</dbReference>
<dbReference type="InterPro" id="IPR013106">
    <property type="entry name" value="Ig_V-set"/>
</dbReference>
<dbReference type="InterPro" id="IPR050199">
    <property type="entry name" value="IgHV"/>
</dbReference>
<dbReference type="PANTHER" id="PTHR23266">
    <property type="entry name" value="IMMUNOGLOBULIN HEAVY CHAIN"/>
    <property type="match status" value="1"/>
</dbReference>
<dbReference type="Pfam" id="PF07686">
    <property type="entry name" value="V-set"/>
    <property type="match status" value="1"/>
</dbReference>
<dbReference type="SMART" id="SM00409">
    <property type="entry name" value="IG"/>
    <property type="match status" value="1"/>
</dbReference>
<dbReference type="SMART" id="SM00406">
    <property type="entry name" value="IGv"/>
    <property type="match status" value="1"/>
</dbReference>
<dbReference type="SUPFAM" id="SSF48726">
    <property type="entry name" value="Immunoglobulin"/>
    <property type="match status" value="1"/>
</dbReference>
<dbReference type="PROSITE" id="PS50835">
    <property type="entry name" value="IG_LIKE"/>
    <property type="match status" value="1"/>
</dbReference>
<name>HVM51_MOUSE</name>
<proteinExistence type="evidence at protein level"/>
<sequence>EVQLQQSGPELVKPGASVKISCKASGYTFTDYYMNWVKQSHGKSLEWIGDINPNNGGTSYNQKFKGKATLTVDKSSSATYMELRSLTSEDSAVYYCARGYGYDPFDVWGTGTTVTVSS</sequence>
<organism>
    <name type="scientific">Mus musculus</name>
    <name type="common">Mouse</name>
    <dbReference type="NCBI Taxonomy" id="10090"/>
    <lineage>
        <taxon>Eukaryota</taxon>
        <taxon>Metazoa</taxon>
        <taxon>Chordata</taxon>
        <taxon>Craniata</taxon>
        <taxon>Vertebrata</taxon>
        <taxon>Euteleostomi</taxon>
        <taxon>Mammalia</taxon>
        <taxon>Eutheria</taxon>
        <taxon>Euarchontoglires</taxon>
        <taxon>Glires</taxon>
        <taxon>Rodentia</taxon>
        <taxon>Myomorpha</taxon>
        <taxon>Muroidea</taxon>
        <taxon>Muridae</taxon>
        <taxon>Murinae</taxon>
        <taxon>Mus</taxon>
        <taxon>Mus</taxon>
    </lineage>
</organism>
<feature type="chain" id="PRO_0000059898" description="Ig heavy chain V region AC38 205.12">
    <location>
        <begin position="1"/>
        <end position="118" status="greater than"/>
    </location>
</feature>
<feature type="region of interest" description="V segment">
    <location>
        <begin position="1"/>
        <end position="98"/>
    </location>
</feature>
<feature type="region of interest" description="D segment">
    <location>
        <begin position="99"/>
        <end position="104"/>
    </location>
</feature>
<feature type="region of interest" description="J segment">
    <location>
        <begin position="105"/>
        <end position="118"/>
    </location>
</feature>
<feature type="disulfide bond" evidence="1">
    <location>
        <begin position="22"/>
        <end position="96"/>
    </location>
</feature>
<feature type="non-terminal residue">
    <location>
        <position position="118"/>
    </location>
</feature>
<reference key="1">
    <citation type="journal article" date="1984" name="EMBO J.">
        <title>A V region determinant (idiotope) expressed at high frequency in B lymphocytes is encoded by a large set of antibody structural genes.</title>
        <authorList>
            <person name="Dildrop R."/>
            <person name="Bovens J."/>
            <person name="Siekevitz M."/>
            <person name="Beyreuther K."/>
            <person name="Rajewsky K."/>
        </authorList>
    </citation>
    <scope>PROTEIN SEQUENCE</scope>
</reference>
<evidence type="ECO:0000255" key="1">
    <source>
        <dbReference type="PROSITE-ProRule" id="PRU00114"/>
    </source>
</evidence>
<accession>P06330</accession>
<protein>
    <recommendedName>
        <fullName>Ig heavy chain V region AC38 205.12</fullName>
    </recommendedName>
</protein>
<keyword id="KW-1064">Adaptive immunity</keyword>
<keyword id="KW-0903">Direct protein sequencing</keyword>
<keyword id="KW-1015">Disulfide bond</keyword>
<keyword id="KW-0391">Immunity</keyword>
<keyword id="KW-1280">Immunoglobulin</keyword>
<keyword id="KW-1185">Reference proteome</keyword>